<keyword id="KW-0002">3D-structure</keyword>
<keyword id="KW-0010">Activator</keyword>
<keyword id="KW-0025">Alternative splicing</keyword>
<keyword id="KW-0963">Cytoplasm</keyword>
<keyword id="KW-0238">DNA-binding</keyword>
<keyword id="KW-0479">Metal-binding</keyword>
<keyword id="KW-0539">Nucleus</keyword>
<keyword id="KW-0597">Phosphoprotein</keyword>
<keyword id="KW-1267">Proteomics identification</keyword>
<keyword id="KW-1185">Reference proteome</keyword>
<keyword id="KW-0677">Repeat</keyword>
<keyword id="KW-0804">Transcription</keyword>
<keyword id="KW-0805">Transcription regulation</keyword>
<keyword id="KW-0862">Zinc</keyword>
<keyword id="KW-0863">Zinc-finger</keyword>
<feature type="chain" id="PRO_0000047369" description="Zinc finger protein 40">
    <location>
        <begin position="1"/>
        <end position="2718"/>
    </location>
</feature>
<feature type="zinc finger region" description="C2H2-type 1" evidence="1">
    <location>
        <begin position="406"/>
        <end position="428"/>
    </location>
</feature>
<feature type="zinc finger region" description="C2H2-type 2" evidence="1">
    <location>
        <begin position="434"/>
        <end position="456"/>
    </location>
</feature>
<feature type="zinc finger region" description="CCHC HIVEP-type" evidence="2">
    <location>
        <begin position="956"/>
        <end position="986"/>
    </location>
</feature>
<feature type="zinc finger region" description="C2H2-type 3" evidence="1">
    <location>
        <begin position="2088"/>
        <end position="2110"/>
    </location>
</feature>
<feature type="zinc finger region" description="C2H2-type 4" evidence="1">
    <location>
        <begin position="2116"/>
        <end position="2140"/>
    </location>
</feature>
<feature type="region of interest" description="Disordered" evidence="3">
    <location>
        <begin position="58"/>
        <end position="182"/>
    </location>
</feature>
<feature type="region of interest" description="Disordered" evidence="3">
    <location>
        <begin position="210"/>
        <end position="256"/>
    </location>
</feature>
<feature type="region of interest" description="Disordered" evidence="3">
    <location>
        <begin position="335"/>
        <end position="373"/>
    </location>
</feature>
<feature type="region of interest" description="Disordered" evidence="3">
    <location>
        <begin position="484"/>
        <end position="511"/>
    </location>
</feature>
<feature type="region of interest" description="Disordered" evidence="3">
    <location>
        <begin position="574"/>
        <end position="727"/>
    </location>
</feature>
<feature type="region of interest" description="Disordered" evidence="3">
    <location>
        <begin position="1022"/>
        <end position="1062"/>
    </location>
</feature>
<feature type="region of interest" description="Disordered" evidence="3">
    <location>
        <begin position="1138"/>
        <end position="1169"/>
    </location>
</feature>
<feature type="region of interest" description="Disordered" evidence="3">
    <location>
        <begin position="1202"/>
        <end position="1282"/>
    </location>
</feature>
<feature type="region of interest" description="Disordered" evidence="3">
    <location>
        <begin position="1384"/>
        <end position="1414"/>
    </location>
</feature>
<feature type="region of interest" description="Disordered" evidence="3">
    <location>
        <begin position="1523"/>
        <end position="1548"/>
    </location>
</feature>
<feature type="region of interest" description="Disordered" evidence="3">
    <location>
        <begin position="1871"/>
        <end position="1911"/>
    </location>
</feature>
<feature type="region of interest" description="Disordered" evidence="3">
    <location>
        <begin position="2155"/>
        <end position="2228"/>
    </location>
</feature>
<feature type="region of interest" description="Disordered" evidence="3">
    <location>
        <begin position="2265"/>
        <end position="2303"/>
    </location>
</feature>
<feature type="region of interest" description="Disordered" evidence="3">
    <location>
        <begin position="2327"/>
        <end position="2381"/>
    </location>
</feature>
<feature type="region of interest" description="Disordered" evidence="3">
    <location>
        <begin position="2572"/>
        <end position="2718"/>
    </location>
</feature>
<feature type="compositionally biased region" description="Basic and acidic residues" evidence="3">
    <location>
        <begin position="142"/>
        <end position="158"/>
    </location>
</feature>
<feature type="compositionally biased region" description="Polar residues" evidence="3">
    <location>
        <begin position="164"/>
        <end position="182"/>
    </location>
</feature>
<feature type="compositionally biased region" description="Polar residues" evidence="3">
    <location>
        <begin position="237"/>
        <end position="256"/>
    </location>
</feature>
<feature type="compositionally biased region" description="Acidic residues" evidence="3">
    <location>
        <begin position="490"/>
        <end position="500"/>
    </location>
</feature>
<feature type="compositionally biased region" description="Basic and acidic residues" evidence="3">
    <location>
        <begin position="576"/>
        <end position="585"/>
    </location>
</feature>
<feature type="compositionally biased region" description="Polar residues" evidence="3">
    <location>
        <begin position="588"/>
        <end position="612"/>
    </location>
</feature>
<feature type="compositionally biased region" description="Basic and acidic residues" evidence="3">
    <location>
        <begin position="617"/>
        <end position="626"/>
    </location>
</feature>
<feature type="compositionally biased region" description="Polar residues" evidence="3">
    <location>
        <begin position="644"/>
        <end position="687"/>
    </location>
</feature>
<feature type="compositionally biased region" description="Polar residues" evidence="3">
    <location>
        <begin position="698"/>
        <end position="721"/>
    </location>
</feature>
<feature type="compositionally biased region" description="Polar residues" evidence="3">
    <location>
        <begin position="1045"/>
        <end position="1062"/>
    </location>
</feature>
<feature type="compositionally biased region" description="Polar residues" evidence="3">
    <location>
        <begin position="1160"/>
        <end position="1169"/>
    </location>
</feature>
<feature type="compositionally biased region" description="Basic and acidic residues" evidence="3">
    <location>
        <begin position="1202"/>
        <end position="1219"/>
    </location>
</feature>
<feature type="compositionally biased region" description="Basic and acidic residues" evidence="3">
    <location>
        <begin position="1246"/>
        <end position="1259"/>
    </location>
</feature>
<feature type="compositionally biased region" description="Low complexity" evidence="3">
    <location>
        <begin position="1394"/>
        <end position="1406"/>
    </location>
</feature>
<feature type="compositionally biased region" description="Low complexity" evidence="3">
    <location>
        <begin position="1523"/>
        <end position="1536"/>
    </location>
</feature>
<feature type="compositionally biased region" description="Polar residues" evidence="3">
    <location>
        <begin position="1871"/>
        <end position="1883"/>
    </location>
</feature>
<feature type="compositionally biased region" description="Basic and acidic residues" evidence="3">
    <location>
        <begin position="2164"/>
        <end position="2175"/>
    </location>
</feature>
<feature type="compositionally biased region" description="Acidic residues" evidence="3">
    <location>
        <begin position="2176"/>
        <end position="2198"/>
    </location>
</feature>
<feature type="compositionally biased region" description="Polar residues" evidence="3">
    <location>
        <begin position="2199"/>
        <end position="2226"/>
    </location>
</feature>
<feature type="compositionally biased region" description="Polar residues" evidence="3">
    <location>
        <begin position="2288"/>
        <end position="2300"/>
    </location>
</feature>
<feature type="compositionally biased region" description="Polar residues" evidence="3">
    <location>
        <begin position="2573"/>
        <end position="2608"/>
    </location>
</feature>
<feature type="compositionally biased region" description="Basic and acidic residues" evidence="3">
    <location>
        <begin position="2623"/>
        <end position="2637"/>
    </location>
</feature>
<feature type="compositionally biased region" description="Polar residues" evidence="3">
    <location>
        <begin position="2651"/>
        <end position="2663"/>
    </location>
</feature>
<feature type="modified residue" description="Phosphoserine" evidence="14">
    <location>
        <position position="141"/>
    </location>
</feature>
<feature type="modified residue" description="Phosphothreonine" evidence="11">
    <location>
        <position position="429"/>
    </location>
</feature>
<feature type="modified residue" description="Phosphoserine" evidence="14">
    <location>
        <position position="476"/>
    </location>
</feature>
<feature type="modified residue" description="Phosphoserine" evidence="14">
    <location>
        <position position="479"/>
    </location>
</feature>
<feature type="modified residue" description="Phosphoserine" evidence="12">
    <location>
        <position position="492"/>
    </location>
</feature>
<feature type="modified residue" description="Phosphoserine" evidence="12">
    <location>
        <position position="495"/>
    </location>
</feature>
<feature type="modified residue" description="Phosphoserine" evidence="14">
    <location>
        <position position="571"/>
    </location>
</feature>
<feature type="modified residue" description="Phosphoserine" evidence="14">
    <location>
        <position position="577"/>
    </location>
</feature>
<feature type="modified residue" description="Phosphoserine" evidence="14">
    <location>
        <position position="670"/>
    </location>
</feature>
<feature type="modified residue" description="Phosphoserine" evidence="14">
    <location>
        <position position="681"/>
    </location>
</feature>
<feature type="modified residue" description="Phosphoserine" evidence="11 14">
    <location>
        <position position="1036"/>
    </location>
</feature>
<feature type="modified residue" description="Phosphoserine" evidence="14">
    <location>
        <position position="1051"/>
    </location>
</feature>
<feature type="modified residue" description="Phosphoserine" evidence="14">
    <location>
        <position position="1091"/>
    </location>
</feature>
<feature type="modified residue" description="Phosphoserine" evidence="14">
    <location>
        <position position="1158"/>
    </location>
</feature>
<feature type="modified residue" description="Phosphoserine" evidence="14">
    <location>
        <position position="1161"/>
    </location>
</feature>
<feature type="modified residue" description="Phosphoserine" evidence="14">
    <location>
        <position position="1180"/>
    </location>
</feature>
<feature type="modified residue" description="Phosphothreonine" evidence="14">
    <location>
        <position position="1268"/>
    </location>
</feature>
<feature type="modified residue" description="Phosphoserine" evidence="11 14">
    <location>
        <position position="1735"/>
    </location>
</feature>
<feature type="modified residue" description="Phosphoserine" evidence="14">
    <location>
        <position position="1740"/>
    </location>
</feature>
<feature type="modified residue" description="Phosphoserine" evidence="12 13 14">
    <location>
        <position position="1749"/>
    </location>
</feature>
<feature type="modified residue" description="Phosphoserine" evidence="13 14">
    <location>
        <position position="1753"/>
    </location>
</feature>
<feature type="modified residue" description="Phosphoserine" evidence="14">
    <location>
        <position position="1884"/>
    </location>
</feature>
<feature type="modified residue" description="Phosphoserine" evidence="14">
    <location>
        <position position="2033"/>
    </location>
</feature>
<feature type="modified residue" description="Phosphoserine" evidence="14">
    <location>
        <position position="2327"/>
    </location>
</feature>
<feature type="modified residue" description="Phosphoserine" evidence="14">
    <location>
        <position position="2599"/>
    </location>
</feature>
<feature type="modified residue" description="Phosphoserine" evidence="14">
    <location>
        <position position="2669"/>
    </location>
</feature>
<feature type="modified residue" description="Phosphoserine" evidence="14">
    <location>
        <position position="2682"/>
    </location>
</feature>
<feature type="splice variant" id="VSP_037714" description="In isoform 2." evidence="9">
    <location>
        <begin position="1"/>
        <end position="2017"/>
    </location>
</feature>
<feature type="splice variant" id="VSP_037715" description="In isoform 3." evidence="9">
    <location>
        <begin position="1"/>
        <end position="2002"/>
    </location>
</feature>
<feature type="splice variant" id="VSP_037716" description="In isoform 3." evidence="9">
    <original>AITTHSKSDLLVYSSKWKSSLS</original>
    <variation>MGQKFQKKSYRLVLKELRNPLL</variation>
    <location>
        <begin position="2003"/>
        <end position="2024"/>
    </location>
</feature>
<feature type="splice variant" id="VSP_037717" description="In isoform 2." evidence="9">
    <original>KWKSSLS</original>
    <variation>MGQKFQK</variation>
    <location>
        <begin position="2018"/>
        <end position="2024"/>
    </location>
</feature>
<feature type="sequence variant" id="VAR_057383" description="In dbSNP:rs2228209.">
    <original>T</original>
    <variation>M</variation>
    <location>
        <position position="187"/>
    </location>
</feature>
<feature type="sequence variant" id="VAR_057384" description="In dbSNP:rs34221818.">
    <original>P</original>
    <variation>L</variation>
    <location>
        <position position="362"/>
    </location>
</feature>
<feature type="sequence variant" id="VAR_057385" description="In dbSNP:rs2228210.">
    <original>T</original>
    <variation>A</variation>
    <location>
        <position position="716"/>
    </location>
</feature>
<feature type="sequence variant" id="VAR_057386" description="In dbSNP:rs2228218.">
    <original>V</original>
    <variation>I</variation>
    <location>
        <position position="828"/>
    </location>
</feature>
<feature type="sequence variant" id="VAR_057387" description="In dbSNP:rs6900196.">
    <original>A</original>
    <variation>T</variation>
    <location>
        <position position="873"/>
    </location>
</feature>
<feature type="sequence variant" id="VAR_057388" description="In dbSNP:rs2228220." evidence="6">
    <original>N</original>
    <variation>S</variation>
    <location>
        <position position="1074"/>
    </location>
</feature>
<feature type="sequence variant" id="VAR_057389" description="In dbSNP:rs34258344." evidence="6">
    <original>K</original>
    <variation>N</variation>
    <location>
        <position position="1170"/>
    </location>
</feature>
<feature type="sequence variant" id="VAR_057390" description="In dbSNP:rs2228212." evidence="4">
    <original>A</original>
    <variation>G</variation>
    <location>
        <position position="1520"/>
    </location>
</feature>
<feature type="sequence variant" id="VAR_057391" description="In dbSNP:rs2228213." evidence="7">
    <original>M</original>
    <variation>I</variation>
    <location>
        <position position="1609"/>
    </location>
</feature>
<feature type="sequence variant" id="VAR_057392" description="In dbSNP:rs1126472." evidence="6">
    <original>Q</original>
    <variation>R</variation>
    <location>
        <position position="1915"/>
    </location>
</feature>
<feature type="sequence variant" id="VAR_059892" description="In dbSNP:rs2228214.">
    <original>T</original>
    <variation>M</variation>
    <location>
        <position position="2444"/>
    </location>
</feature>
<feature type="sequence variant" id="VAR_059893" description="In dbSNP:rs1042054." evidence="6 7">
    <original>A</original>
    <variation>G</variation>
    <location>
        <position position="2692"/>
    </location>
</feature>
<feature type="sequence conflict" description="In Ref. 1; CAA35798." evidence="10" ref="1">
    <original>P</original>
    <variation>N</variation>
    <location>
        <position position="515"/>
    </location>
</feature>
<feature type="sequence conflict" description="In Ref. 1; CAA35798." evidence="10" ref="1">
    <original>V</original>
    <variation>I</variation>
    <location>
        <position position="1227"/>
    </location>
</feature>
<feature type="sequence conflict" description="In Ref. 1; CAA35798." evidence="10" ref="1">
    <original>N</original>
    <variation>G</variation>
    <location>
        <position position="1436"/>
    </location>
</feature>
<feature type="sequence conflict" description="In Ref. 5; AAA17534." evidence="10" ref="5">
    <original>V</original>
    <variation>E</variation>
    <location>
        <position position="1660"/>
    </location>
</feature>
<feature type="sequence conflict" description="In Ref. 1; CAA35798." evidence="10" ref="1">
    <original>I</original>
    <variation>L</variation>
    <location>
        <position position="1883"/>
    </location>
</feature>
<feature type="sequence conflict" description="In Ref. 6; AAV85766." evidence="10" ref="6">
    <original>F</original>
    <variation>C</variation>
    <location>
        <position position="2067"/>
    </location>
</feature>
<feature type="sequence conflict" description="In Ref. 1; CAA35798." evidence="10" ref="1">
    <original>V</original>
    <variation>I</variation>
    <location>
        <position position="2080"/>
    </location>
</feature>
<feature type="sequence conflict" description="In Ref. 1; CAA35798." evidence="10" ref="1">
    <original>V</original>
    <variation>I</variation>
    <location>
        <position position="2149"/>
    </location>
</feature>
<feature type="sequence conflict" description="In Ref. 6; AAV85766." evidence="10" ref="6">
    <original>S</original>
    <variation>P</variation>
    <location>
        <position position="2388"/>
    </location>
</feature>
<feature type="turn" evidence="15">
    <location>
        <begin position="2091"/>
        <end position="2093"/>
    </location>
</feature>
<feature type="helix" evidence="15">
    <location>
        <begin position="2100"/>
        <end position="2109"/>
    </location>
</feature>
<feature type="strand" evidence="15">
    <location>
        <begin position="2119"/>
        <end position="2122"/>
    </location>
</feature>
<feature type="strand" evidence="15">
    <location>
        <begin position="2124"/>
        <end position="2127"/>
    </location>
</feature>
<feature type="helix" evidence="15">
    <location>
        <begin position="2128"/>
        <end position="2136"/>
    </location>
</feature>
<feature type="strand" evidence="15">
    <location>
        <begin position="2137"/>
        <end position="2140"/>
    </location>
</feature>
<reference key="1">
    <citation type="journal article" date="1990" name="Genes Dev.">
        <title>A DNA-binding protein containing two widely separated zinc finger motifs that recognize the same DNA sequence.</title>
        <authorList>
            <person name="Fan C.M."/>
            <person name="Maniatis T."/>
        </authorList>
    </citation>
    <scope>NUCLEOTIDE SEQUENCE [MRNA] (ISOFORM 1)</scope>
    <scope>VARIANTS SER-1074; ASN-1170; ARG-1915 AND GLY-2692</scope>
</reference>
<reference key="2">
    <citation type="patent" date="2002-12-12" number="CA2448384">
        <title>Transcriptional regulator of genes involved in the control of cell growth or cell proliferation. Use of said regulator as a therapeutic or diagnostic agent.</title>
        <authorList>
            <person name="Tovey M."/>
        </authorList>
    </citation>
    <scope>NUCLEOTIDE SEQUENCE [MRNA] (ISOFORMS 2 AND 3)</scope>
    <scope>FUNCTION (ISOFORMS 2 AND 3)</scope>
    <scope>SUBCELLULAR LOCATION (ISOFORMS 2 AND 3)</scope>
</reference>
<reference key="3">
    <citation type="journal article" date="2003" name="Nature">
        <title>The DNA sequence and analysis of human chromosome 6.</title>
        <authorList>
            <person name="Mungall A.J."/>
            <person name="Palmer S.A."/>
            <person name="Sims S.K."/>
            <person name="Edwards C.A."/>
            <person name="Ashurst J.L."/>
            <person name="Wilming L."/>
            <person name="Jones M.C."/>
            <person name="Horton R."/>
            <person name="Hunt S.E."/>
            <person name="Scott C.E."/>
            <person name="Gilbert J.G.R."/>
            <person name="Clamp M.E."/>
            <person name="Bethel G."/>
            <person name="Milne S."/>
            <person name="Ainscough R."/>
            <person name="Almeida J.P."/>
            <person name="Ambrose K.D."/>
            <person name="Andrews T.D."/>
            <person name="Ashwell R.I.S."/>
            <person name="Babbage A.K."/>
            <person name="Bagguley C.L."/>
            <person name="Bailey J."/>
            <person name="Banerjee R."/>
            <person name="Barker D.J."/>
            <person name="Barlow K.F."/>
            <person name="Bates K."/>
            <person name="Beare D.M."/>
            <person name="Beasley H."/>
            <person name="Beasley O."/>
            <person name="Bird C.P."/>
            <person name="Blakey S.E."/>
            <person name="Bray-Allen S."/>
            <person name="Brook J."/>
            <person name="Brown A.J."/>
            <person name="Brown J.Y."/>
            <person name="Burford D.C."/>
            <person name="Burrill W."/>
            <person name="Burton J."/>
            <person name="Carder C."/>
            <person name="Carter N.P."/>
            <person name="Chapman J.C."/>
            <person name="Clark S.Y."/>
            <person name="Clark G."/>
            <person name="Clee C.M."/>
            <person name="Clegg S."/>
            <person name="Cobley V."/>
            <person name="Collier R.E."/>
            <person name="Collins J.E."/>
            <person name="Colman L.K."/>
            <person name="Corby N.R."/>
            <person name="Coville G.J."/>
            <person name="Culley K.M."/>
            <person name="Dhami P."/>
            <person name="Davies J."/>
            <person name="Dunn M."/>
            <person name="Earthrowl M.E."/>
            <person name="Ellington A.E."/>
            <person name="Evans K.A."/>
            <person name="Faulkner L."/>
            <person name="Francis M.D."/>
            <person name="Frankish A."/>
            <person name="Frankland J."/>
            <person name="French L."/>
            <person name="Garner P."/>
            <person name="Garnett J."/>
            <person name="Ghori M.J."/>
            <person name="Gilby L.M."/>
            <person name="Gillson C.J."/>
            <person name="Glithero R.J."/>
            <person name="Grafham D.V."/>
            <person name="Grant M."/>
            <person name="Gribble S."/>
            <person name="Griffiths C."/>
            <person name="Griffiths M.N.D."/>
            <person name="Hall R."/>
            <person name="Halls K.S."/>
            <person name="Hammond S."/>
            <person name="Harley J.L."/>
            <person name="Hart E.A."/>
            <person name="Heath P.D."/>
            <person name="Heathcott R."/>
            <person name="Holmes S.J."/>
            <person name="Howden P.J."/>
            <person name="Howe K.L."/>
            <person name="Howell G.R."/>
            <person name="Huckle E."/>
            <person name="Humphray S.J."/>
            <person name="Humphries M.D."/>
            <person name="Hunt A.R."/>
            <person name="Johnson C.M."/>
            <person name="Joy A.A."/>
            <person name="Kay M."/>
            <person name="Keenan S.J."/>
            <person name="Kimberley A.M."/>
            <person name="King A."/>
            <person name="Laird G.K."/>
            <person name="Langford C."/>
            <person name="Lawlor S."/>
            <person name="Leongamornlert D.A."/>
            <person name="Leversha M."/>
            <person name="Lloyd C.R."/>
            <person name="Lloyd D.M."/>
            <person name="Loveland J.E."/>
            <person name="Lovell J."/>
            <person name="Martin S."/>
            <person name="Mashreghi-Mohammadi M."/>
            <person name="Maslen G.L."/>
            <person name="Matthews L."/>
            <person name="McCann O.T."/>
            <person name="McLaren S.J."/>
            <person name="McLay K."/>
            <person name="McMurray A."/>
            <person name="Moore M.J.F."/>
            <person name="Mullikin J.C."/>
            <person name="Niblett D."/>
            <person name="Nickerson T."/>
            <person name="Novik K.L."/>
            <person name="Oliver K."/>
            <person name="Overton-Larty E.K."/>
            <person name="Parker A."/>
            <person name="Patel R."/>
            <person name="Pearce A.V."/>
            <person name="Peck A.I."/>
            <person name="Phillimore B.J.C.T."/>
            <person name="Phillips S."/>
            <person name="Plumb R.W."/>
            <person name="Porter K.M."/>
            <person name="Ramsey Y."/>
            <person name="Ranby S.A."/>
            <person name="Rice C.M."/>
            <person name="Ross M.T."/>
            <person name="Searle S.M."/>
            <person name="Sehra H.K."/>
            <person name="Sheridan E."/>
            <person name="Skuce C.D."/>
            <person name="Smith S."/>
            <person name="Smith M."/>
            <person name="Spraggon L."/>
            <person name="Squares S.L."/>
            <person name="Steward C.A."/>
            <person name="Sycamore N."/>
            <person name="Tamlyn-Hall G."/>
            <person name="Tester J."/>
            <person name="Theaker A.J."/>
            <person name="Thomas D.W."/>
            <person name="Thorpe A."/>
            <person name="Tracey A."/>
            <person name="Tromans A."/>
            <person name="Tubby B."/>
            <person name="Wall M."/>
            <person name="Wallis J.M."/>
            <person name="West A.P."/>
            <person name="White S.S."/>
            <person name="Whitehead S.L."/>
            <person name="Whittaker H."/>
            <person name="Wild A."/>
            <person name="Willey D.J."/>
            <person name="Wilmer T.E."/>
            <person name="Wood J.M."/>
            <person name="Wray P.W."/>
            <person name="Wyatt J.C."/>
            <person name="Young L."/>
            <person name="Younger R.M."/>
            <person name="Bentley D.R."/>
            <person name="Coulson A."/>
            <person name="Durbin R.M."/>
            <person name="Hubbard T."/>
            <person name="Sulston J.E."/>
            <person name="Dunham I."/>
            <person name="Rogers J."/>
            <person name="Beck S."/>
        </authorList>
    </citation>
    <scope>NUCLEOTIDE SEQUENCE [LARGE SCALE GENOMIC DNA]</scope>
</reference>
<reference key="4">
    <citation type="journal article" date="2004" name="Genome Res.">
        <title>The status, quality, and expansion of the NIH full-length cDNA project: the Mammalian Gene Collection (MGC).</title>
        <authorList>
            <consortium name="The MGC Project Team"/>
        </authorList>
    </citation>
    <scope>NUCLEOTIDE SEQUENCE [LARGE SCALE MRNA] (ISOFORM 1)</scope>
    <scope>VARIANT GLY-1520</scope>
</reference>
<reference key="5">
    <citation type="journal article" date="1990" name="Mol. Cell. Biol.">
        <title>A large protein containing zinc finger domains binds to related sequence elements in the enhancers of the class I major histocompatibility complex and kappa immunoglobulin genes.</title>
        <authorList>
            <person name="Baldwin A.S. Jr."/>
            <person name="LeClair K.P."/>
            <person name="Singh H."/>
            <person name="Sharp P.A."/>
        </authorList>
    </citation>
    <scope>NUCLEOTIDE SEQUENCE [MRNA] OF 817-2718 (ISOFORM 1)</scope>
    <scope>VARIANTS ILE-1609 AND GLY-2692</scope>
</reference>
<reference key="6">
    <citation type="submission" date="2004-07" db="EMBL/GenBank/DDBJ databases">
        <authorList>
            <person name="Yu B."/>
            <person name="Mitchell G.A."/>
            <person name="Richter A."/>
        </authorList>
    </citation>
    <scope>NUCLEOTIDE SEQUENCE [MRNA] OF 2035-2718 (ISOFORM 1)</scope>
    <source>
        <tissue>Liver</tissue>
    </source>
</reference>
<reference key="7">
    <citation type="journal article" date="1992" name="J. Virol.">
        <title>Regulation of human immunodeficiency virus enhancer function by PRDII-BF1 and c-rel gene products.</title>
        <authorList>
            <person name="Muchardt C."/>
            <person name="Seeler J.S."/>
            <person name="Nirula A."/>
            <person name="Shurland D.L."/>
            <person name="Gaynor R.B."/>
        </authorList>
    </citation>
    <scope>FUNCTION (ISOFORM 2)</scope>
    <scope>ALTERNATIVE SPLICING</scope>
</reference>
<reference key="8">
    <citation type="journal article" date="1994" name="J. Virol.">
        <title>Transcription factor PRDII-BF1 activates human immunodeficiency virus type 1 gene expression.</title>
        <authorList>
            <person name="Seeler J.S."/>
            <person name="Muchardt C."/>
            <person name="Suessle A."/>
            <person name="Gaynor R.B."/>
        </authorList>
    </citation>
    <scope>FUNCTION (ISOFORM 1)</scope>
</reference>
<reference key="9">
    <citation type="journal article" date="2002" name="EMBO Rep.">
        <title>GAAP-1: a transcriptional activator of p53 and IRF-1 possesses pro-apoptotic activity.</title>
        <authorList>
            <person name="Lallemand C."/>
            <person name="Palmieri M."/>
            <person name="Blanchard B."/>
            <person name="Meritet J.F."/>
            <person name="Tovey M.G."/>
        </authorList>
    </citation>
    <scope>FUNCTION (ISOFORM 2)</scope>
    <scope>SUBCELLULAR LOCATION (ISOFORM 2)</scope>
    <scope>ALTERNATIVE SPLICING</scope>
</reference>
<reference key="10">
    <citation type="journal article" date="2006" name="Cell">
        <title>Global, in vivo, and site-specific phosphorylation dynamics in signaling networks.</title>
        <authorList>
            <person name="Olsen J.V."/>
            <person name="Blagoev B."/>
            <person name="Gnad F."/>
            <person name="Macek B."/>
            <person name="Kumar C."/>
            <person name="Mortensen P."/>
            <person name="Mann M."/>
        </authorList>
    </citation>
    <scope>IDENTIFICATION BY MASS SPECTROMETRY [LARGE SCALE ANALYSIS]</scope>
    <source>
        <tissue>Cervix carcinoma</tissue>
    </source>
</reference>
<reference key="11">
    <citation type="journal article" date="2008" name="Proc. Natl. Acad. Sci. U.S.A.">
        <title>A quantitative atlas of mitotic phosphorylation.</title>
        <authorList>
            <person name="Dephoure N."/>
            <person name="Zhou C."/>
            <person name="Villen J."/>
            <person name="Beausoleil S.A."/>
            <person name="Bakalarski C.E."/>
            <person name="Elledge S.J."/>
            <person name="Gygi S.P."/>
        </authorList>
    </citation>
    <scope>PHOSPHORYLATION [LARGE SCALE ANALYSIS] AT THR-429; SER-1036 AND SER-1735</scope>
    <scope>IDENTIFICATION BY MASS SPECTROMETRY [LARGE SCALE ANALYSIS]</scope>
    <source>
        <tissue>Cervix carcinoma</tissue>
    </source>
</reference>
<reference key="12">
    <citation type="journal article" date="2009" name="Anal. Chem.">
        <title>Lys-N and trypsin cover complementary parts of the phosphoproteome in a refined SCX-based approach.</title>
        <authorList>
            <person name="Gauci S."/>
            <person name="Helbig A.O."/>
            <person name="Slijper M."/>
            <person name="Krijgsveld J."/>
            <person name="Heck A.J."/>
            <person name="Mohammed S."/>
        </authorList>
    </citation>
    <scope>IDENTIFICATION BY MASS SPECTROMETRY [LARGE SCALE ANALYSIS]</scope>
</reference>
<reference key="13">
    <citation type="journal article" date="2009" name="Exp. Cell Res.">
        <title>Cirhin up-regulates a canonical NF-kappaB element through strong interaction with Cirip/HIVEP1.</title>
        <authorList>
            <person name="Yu B."/>
            <person name="Mitchell G.A."/>
            <person name="Richter A."/>
        </authorList>
    </citation>
    <scope>SUBCELLULAR LOCATION</scope>
    <scope>INTERACTION WITH UTP4</scope>
</reference>
<reference key="14">
    <citation type="journal article" date="2009" name="Sci. Signal.">
        <title>Quantitative phosphoproteomic analysis of T cell receptor signaling reveals system-wide modulation of protein-protein interactions.</title>
        <authorList>
            <person name="Mayya V."/>
            <person name="Lundgren D.H."/>
            <person name="Hwang S.-I."/>
            <person name="Rezaul K."/>
            <person name="Wu L."/>
            <person name="Eng J.K."/>
            <person name="Rodionov V."/>
            <person name="Han D.K."/>
        </authorList>
    </citation>
    <scope>PHOSPHORYLATION [LARGE SCALE ANALYSIS] AT SER-492; SER-495 AND SER-1749</scope>
    <scope>IDENTIFICATION BY MASS SPECTROMETRY [LARGE SCALE ANALYSIS]</scope>
    <source>
        <tissue>Leukemic T-cell</tissue>
    </source>
</reference>
<reference key="15">
    <citation type="journal article" date="2010" name="Sci. Signal.">
        <title>Quantitative phosphoproteomics reveals widespread full phosphorylation site occupancy during mitosis.</title>
        <authorList>
            <person name="Olsen J.V."/>
            <person name="Vermeulen M."/>
            <person name="Santamaria A."/>
            <person name="Kumar C."/>
            <person name="Miller M.L."/>
            <person name="Jensen L.J."/>
            <person name="Gnad F."/>
            <person name="Cox J."/>
            <person name="Jensen T.S."/>
            <person name="Nigg E.A."/>
            <person name="Brunak S."/>
            <person name="Mann M."/>
        </authorList>
    </citation>
    <scope>PHOSPHORYLATION [LARGE SCALE ANALYSIS] AT SER-1749 AND SER-1753</scope>
    <scope>IDENTIFICATION BY MASS SPECTROMETRY [LARGE SCALE ANALYSIS]</scope>
    <source>
        <tissue>Cervix carcinoma</tissue>
    </source>
</reference>
<reference key="16">
    <citation type="journal article" date="2013" name="J. Proteome Res.">
        <title>Toward a comprehensive characterization of a human cancer cell phosphoproteome.</title>
        <authorList>
            <person name="Zhou H."/>
            <person name="Di Palma S."/>
            <person name="Preisinger C."/>
            <person name="Peng M."/>
            <person name="Polat A.N."/>
            <person name="Heck A.J."/>
            <person name="Mohammed S."/>
        </authorList>
    </citation>
    <scope>PHOSPHORYLATION [LARGE SCALE ANALYSIS] AT SER-141; SER-476; SER-479; SER-571; SER-577; SER-670; SER-681; SER-1036; SER-1051; SER-1091; SER-1158; SER-1161; SER-1180; THR-1268; SER-1735; SER-1740; SER-1749; SER-1753; SER-1884; SER-2033; SER-2327; SER-2599; SER-2669 AND SER-2682</scope>
    <scope>IDENTIFICATION BY MASS SPECTROMETRY [LARGE SCALE ANALYSIS]</scope>
    <source>
        <tissue>Cervix carcinoma</tissue>
        <tissue>Erythroleukemia</tissue>
    </source>
</reference>
<reference key="17">
    <citation type="journal article" date="1990" name="Biochemistry">
        <title>High-resolution three-dimensional structure of a single zinc finger from a human enhancer binding protein in solution.</title>
        <authorList>
            <person name="Omichinski J.G."/>
            <person name="Clore G.M."/>
            <person name="Appella E."/>
            <person name="Sakaguchi K."/>
            <person name="Gronenborn A.M."/>
        </authorList>
    </citation>
    <scope>STRUCTURE BY NMR OF 2114-2143</scope>
</reference>
<reference key="18">
    <citation type="journal article" date="1992" name="Biochemistry">
        <title>High-resolution solution structure of the double Cys2His2 zinc finger from the human enhancer binding protein MBP-1.</title>
        <authorList>
            <person name="Omichinski J.G."/>
            <person name="Clore G.M."/>
            <person name="Robien M."/>
            <person name="Sakaguchi K."/>
            <person name="Appella E."/>
            <person name="Gronenborn A.M."/>
        </authorList>
    </citation>
    <scope>STRUCTURE BY NMR OF 2088-2143</scope>
</reference>
<evidence type="ECO:0000255" key="1">
    <source>
        <dbReference type="PROSITE-ProRule" id="PRU00042"/>
    </source>
</evidence>
<evidence type="ECO:0000255" key="2">
    <source>
        <dbReference type="PROSITE-ProRule" id="PRU01154"/>
    </source>
</evidence>
<evidence type="ECO:0000256" key="3">
    <source>
        <dbReference type="SAM" id="MobiDB-lite"/>
    </source>
</evidence>
<evidence type="ECO:0000269" key="4">
    <source>
    </source>
</evidence>
<evidence type="ECO:0000269" key="5">
    <source>
    </source>
</evidence>
<evidence type="ECO:0000269" key="6">
    <source>
    </source>
</evidence>
<evidence type="ECO:0000269" key="7">
    <source>
    </source>
</evidence>
<evidence type="ECO:0000269" key="8">
    <source ref="2"/>
</evidence>
<evidence type="ECO:0000303" key="9">
    <source ref="2"/>
</evidence>
<evidence type="ECO:0000305" key="10"/>
<evidence type="ECO:0007744" key="11">
    <source>
    </source>
</evidence>
<evidence type="ECO:0007744" key="12">
    <source>
    </source>
</evidence>
<evidence type="ECO:0007744" key="13">
    <source>
    </source>
</evidence>
<evidence type="ECO:0007744" key="14">
    <source>
    </source>
</evidence>
<evidence type="ECO:0007829" key="15">
    <source>
        <dbReference type="PDB" id="1BBO"/>
    </source>
</evidence>
<name>ZEP1_HUMAN</name>
<organism>
    <name type="scientific">Homo sapiens</name>
    <name type="common">Human</name>
    <dbReference type="NCBI Taxonomy" id="9606"/>
    <lineage>
        <taxon>Eukaryota</taxon>
        <taxon>Metazoa</taxon>
        <taxon>Chordata</taxon>
        <taxon>Craniata</taxon>
        <taxon>Vertebrata</taxon>
        <taxon>Euteleostomi</taxon>
        <taxon>Mammalia</taxon>
        <taxon>Eutheria</taxon>
        <taxon>Euarchontoglires</taxon>
        <taxon>Primates</taxon>
        <taxon>Haplorrhini</taxon>
        <taxon>Catarrhini</taxon>
        <taxon>Hominidae</taxon>
        <taxon>Homo</taxon>
    </lineage>
</organism>
<proteinExistence type="evidence at protein level"/>
<sequence>MPRTKQIHPRNLRDKIEEAQKELNGAEVSKKEILQAGVKGTSESLKGVKRKKIVAENHLKKIPKSPLRNPLQAKHKQNTEESSFAVLHSASESHKKQNYIPVKNGKQFTKQNGETPGIIAEASKSEESVSPKKPLFLQQPSELRRWRSEGADPAKFSDLDEQCDSSSLSSKTRTDNSECISSHCGTTSPSYTNTAFDVLLKAMEPELSTLSQKGSPCAIKTEKLRPNKTARSPPKLKNSSMDAPNQTSQELVAESQSSCTSYTVHMSAAQKNEQGAMQSASHLYHQHEHFVPKSNQHNQQLPGCSGFTGSLTNLQNQENAKLEQVYNIAVTSSVGLTSPSSRSQVTPQNQQMDSASPLSISPANSTQSPPMPIYNSTHVASVVNQSVEQMCNLLLKDQKPKKQGKYICEYCNRACAKPSVLLKHIRSHTGERPYPCVTCGFSFKTKSNLYKHKKSHAHTIKLGLVLQPDAGGLFLSHESPKALSIHSDVEDSGESEEEGATDERQHDLGAMELQPVHIIKRMSNAETLLKSSFTPSSPENVIGDFLLQDRSAESQAVTELPKVVVHHVTVSPLRTDSPKAMDPKPELSSAQKQKDLQVTNVQPLSANMSQGGVSRLETNENSHQKGDMNPLEGKQDSHVGTVHAQLQRQQATDYSQEQQGKLLSPRSLGSTDSGYFSRSESADQTVSPPTPFARRLPSTEQDSGRSNGPSAALVTTSTPSALPTGEKALLLPGQMRPPLATKTLEERISKLISDNEALVDDKQLDSVKPRRTSLSRRGSIDSPKSYIFKDSFQFDLKPVGRRTSSSSDIPKSPFTPTEKSKQVFLLSVPSLDCLPITRSNSMPTTGYSAVPANIIPPPHPLRGSQSFDDKIGAFYDDVFVSGPNAPVPQSGHPRTLVRQAAIEDSSANESHVLGTGQSLDESHQGCHAAGEAMSVRSKALAQGPHIEKKKSHQGRGTMFECETCRNRYRKLENFENHKKFYCSELHGPKTKVAMREPEHSPVPGGLQPQILHYRVAGSSGIWEQTPQIRKRRKMKSVGDDEELQQNESGTSPKSSEGLQFQNALGCNPSLPKHNVTIRSDQQHKNIQLQNSHIHLVARGPEQTMDPKLSTIMEQQISSAAQDKIELQRHGTGISVIQHTNSLSRPNSFDKPEPFERASPVSFQELNRTGKSGSLKVIGISQEESHPSRDGSHPHQLALSDALRGELQESSRKSPSERHVLGQPSRLVRQHNIQVPEILVTEEPDRDLEAQCHDQEKSEKFSWPQRSETLSKLPTEKLPPKKKRLRLAEIEHSSTESSFDSTLSRSLSRESSLSHTSSFSASLDIEDVSKTEASPKIDFLNKAEFLMIPAGLNTLNVPGCHREMRRTASEQINCTQTSMEVSDLRSKSFDCGSITPPQTTPLTELQPPSSPSRVGVTGHVPLLERRRGPLVRQISLNIAPDSHLSPVHPTSFQNTALPSVNAVPYQGPQLTSTSLAEFSANTLHSQTQVKDLQAETSNSSSTNVFPVQQLCDINLLNQIHAPPSHQSTQLSLQVSTQGSKPDKNSVLSGSSKSEDCFAPKYQLHCQVFTSGPSCSSNPVHSLPNQVISDPVGTDHCVTSATLPTKLIDSMSNSHPLLPPELRPLGSQVQKVPSSFMLPIRLQSSVPAYCFATLTSLPQILVTQDLPNQPICQTNHSVVPISEEQNSVPTLQKGHQNALPNPEKEFLCENVFSEMSQNSSLSESLPITQKISVGRLSPQQESSASSKRMLSPANSLDIAMEKHQKRAKDENGAVCATDVRPLEALSSRVNEASKQKKPILVRQVCTTEPLDGVMLEKDVFSQPEISNEAVNLTNVLPADNSSTGCSKFVVIEPISELQEFENIKSSTSLTLTVRSSPAPSENTHISPLKCTDNNQERKSPGVKNQGDKVNIQEQSQQPVTSLSLFNIKDTQQLAFPSLKTTTNFTWCYLLRQKSLHLPQKDQKTSAYTDWTVSASNPNPLGLPTKVALALLNSKQNTGKSLYCQAITTHSKSDLLVYSSKWKSSLSKRALGNQKSTVVEFSNKDASEINSEQDKENSLIKSEPRRIKIFDGGYKSNEEYVYVRGRGRGKYICEECGIRCKKPSMLKKHIRTHTDVRPYHCTYCNFSFKTKGNLTKHMKSKAHSKKCVDLGVSVGLIDEQDTEESDEKQRFSYERSGYDLEESDGPDEDDNENEDDDEDSQAESVLSATPSVTASPQHLPSRSSLQDPVSTDEDVRITDCFSGVHTDPMDVLPRALLTRMTVLSTAQSDYNRKTLSPGKARQRAARDENDTIPSVDTSRSPCHQMSVDYPESEEILRSSMAGKAVAITQSPSSVRLPPAAAEHSPQTAAGMPSVASPHPDPQEQKQQITLQPTPGLPSPHTHLFSHLPLHSQQQSRTPYNMVPVGGIHVVPAGLTYSTFVPLQAGPVQLTIPAVSVVHRTLGTHRNTVTEVSGTTNPAGVAELSSVVPCIPIGQIRVPGLQNLSTPGLQSLPSLSMETVNIVGLANTNMAPQVHPPGLALNAVGLQVLTANPSSQSSPAPQAHIPGLQILNIALPTLIPSVSQVAVDAQGAPEMPASQSKACETQPKQTSVASANQVSRTESPQGLPTVQRENAKKVLNPPAPAGDHARLDGLSKMDTEKAASANHVKPKPELTSIQGQPASTSQPLLKAHSEVFTKPSGQQTLSPDRQVPRPTALPRRQPTVHFSDVSSDDDEDRLVIAT</sequence>
<gene>
    <name type="primary">HIVEP1</name>
    <name type="synonym">ZNF40</name>
</gene>
<comment type="function">
    <text>This protein specifically binds to the DNA sequence 5'-GGGACTTTCC-3' which is found in the enhancer elements of numerous viral promoters such as those of SV40, CMV, or HIV-1. In addition, related sequences are found in the enhancer elements of a number of cellular promoters, including those of the class I MHC, interleukin-2 receptor, and interferon-beta genes. It may act in T-cell activation. Involved in activating HIV-1 gene expression. Isoform 2 and isoform 3 also bind to the IPCS (IRF1 and p53 common sequence) DNA sequence in the promoter region of interferon regulatory factor 1 and p53 genes and are involved in transcription regulation of these genes. Isoform 2 does not activate HIV-1 gene expression. Isoform 2 and isoform 3 may be involved in apoptosis.</text>
</comment>
<comment type="subunit">
    <text evidence="5">Interacts with UTP4.</text>
</comment>
<comment type="interaction">
    <interactant intactId="EBI-722264">
        <id>P15822</id>
    </interactant>
    <interactant intactId="EBI-930964">
        <id>P54253</id>
        <label>ATXN1</label>
    </interactant>
    <organismsDiffer>false</organismsDiffer>
    <experiments>6</experiments>
</comment>
<comment type="interaction">
    <interactant intactId="EBI-722264">
        <id>P15822</id>
    </interactant>
    <interactant intactId="EBI-766279">
        <id>O00555</id>
        <label>CACNA1A</label>
    </interactant>
    <organismsDiffer>false</organismsDiffer>
    <experiments>2</experiments>
</comment>
<comment type="interaction">
    <interactant intactId="EBI-722264">
        <id>P15822</id>
    </interactant>
    <interactant intactId="EBI-2602591">
        <id>Q969X6</id>
        <label>UTP4</label>
    </interactant>
    <organismsDiffer>false</organismsDiffer>
    <experiments>3</experiments>
</comment>
<comment type="subcellular location">
    <molecule>Isoform 1</molecule>
    <subcellularLocation>
        <location>Nucleus</location>
    </subcellularLocation>
</comment>
<comment type="subcellular location">
    <molecule>Isoform 2</molecule>
    <subcellularLocation>
        <location>Cytoplasm</location>
    </subcellularLocation>
    <subcellularLocation>
        <location>Nucleus</location>
    </subcellularLocation>
</comment>
<comment type="subcellular location">
    <molecule>Isoform 3</molecule>
    <subcellularLocation>
        <location evidence="8">Cytoplasm</location>
    </subcellularLocation>
    <subcellularLocation>
        <location evidence="8">Nucleus</location>
    </subcellularLocation>
</comment>
<comment type="alternative products">
    <event type="alternative splicing"/>
    <isoform>
        <id>P15822-1</id>
        <name>1</name>
        <sequence type="displayed"/>
    </isoform>
    <isoform>
        <id>P15822-2</id>
        <name>2</name>
        <name>Delta 2</name>
        <name>GAAP-1</name>
        <sequence type="described" ref="VSP_037714 VSP_037717"/>
    </isoform>
    <isoform>
        <id>P15822-3</id>
        <name>3</name>
        <name>GAAP-2</name>
        <sequence type="described" ref="VSP_037715 VSP_037716"/>
    </isoform>
</comment>
<comment type="induction">
    <text>By mitogens and phorbol ester.</text>
</comment>
<comment type="domain">
    <text>Contains two sets of 2 zinc-fingers, which are widely separated and recognize the same DNA sequence. There is a fifth zinc-finger in-between.</text>
</comment>
<comment type="sequence caution" evidence="10">
    <conflict type="frameshift">
        <sequence resource="EMBL-CDS" id="CAA35798"/>
    </conflict>
</comment>
<dbReference type="EMBL" id="X51435">
    <property type="protein sequence ID" value="CAA35798.1"/>
    <property type="status" value="ALT_FRAME"/>
    <property type="molecule type" value="mRNA"/>
</dbReference>
<dbReference type="EMBL" id="AL137221">
    <property type="status" value="NOT_ANNOTATED_CDS"/>
    <property type="molecule type" value="Genomic_DNA"/>
</dbReference>
<dbReference type="EMBL" id="AL157373">
    <property type="status" value="NOT_ANNOTATED_CDS"/>
    <property type="molecule type" value="Genomic_DNA"/>
</dbReference>
<dbReference type="EMBL" id="AL391828">
    <property type="status" value="NOT_ANNOTATED_CDS"/>
    <property type="molecule type" value="Genomic_DNA"/>
</dbReference>
<dbReference type="EMBL" id="Z98050">
    <property type="status" value="NOT_ANNOTATED_CDS"/>
    <property type="molecule type" value="Genomic_DNA"/>
</dbReference>
<dbReference type="EMBL" id="BC140816">
    <property type="protein sequence ID" value="AAI40817.1"/>
    <property type="molecule type" value="mRNA"/>
</dbReference>
<dbReference type="EMBL" id="M32019">
    <property type="protein sequence ID" value="AAA17534.1"/>
    <property type="molecule type" value="mRNA"/>
</dbReference>
<dbReference type="EMBL" id="AY673640">
    <property type="protein sequence ID" value="AAV85766.1"/>
    <property type="molecule type" value="mRNA"/>
</dbReference>
<dbReference type="CCDS" id="CCDS43426.1">
    <molecule id="P15822-1"/>
</dbReference>
<dbReference type="PIR" id="A34203">
    <property type="entry name" value="A34203"/>
</dbReference>
<dbReference type="RefSeq" id="NP_002105.3">
    <molecule id="P15822-1"/>
    <property type="nucleotide sequence ID" value="NM_002114.4"/>
</dbReference>
<dbReference type="RefSeq" id="XP_011512853.1">
    <property type="nucleotide sequence ID" value="XM_011514551.2"/>
</dbReference>
<dbReference type="RefSeq" id="XP_011512854.1">
    <molecule id="P15822-1"/>
    <property type="nucleotide sequence ID" value="XM_011514552.3"/>
</dbReference>
<dbReference type="RefSeq" id="XP_011512855.1">
    <molecule id="P15822-1"/>
    <property type="nucleotide sequence ID" value="XM_011514553.2"/>
</dbReference>
<dbReference type="RefSeq" id="XP_047274653.1">
    <molecule id="P15822-1"/>
    <property type="nucleotide sequence ID" value="XM_047418697.1"/>
</dbReference>
<dbReference type="RefSeq" id="XP_047274654.1">
    <molecule id="P15822-1"/>
    <property type="nucleotide sequence ID" value="XM_047418698.1"/>
</dbReference>
<dbReference type="RefSeq" id="XP_047274655.1">
    <molecule id="P15822-1"/>
    <property type="nucleotide sequence ID" value="XM_047418699.1"/>
</dbReference>
<dbReference type="RefSeq" id="XP_047274656.1">
    <molecule id="P15822-1"/>
    <property type="nucleotide sequence ID" value="XM_047418700.1"/>
</dbReference>
<dbReference type="RefSeq" id="XP_054211244.1">
    <molecule id="P15822-1"/>
    <property type="nucleotide sequence ID" value="XM_054355269.1"/>
</dbReference>
<dbReference type="RefSeq" id="XP_054211245.1">
    <molecule id="P15822-1"/>
    <property type="nucleotide sequence ID" value="XM_054355270.1"/>
</dbReference>
<dbReference type="RefSeq" id="XP_054211246.1">
    <molecule id="P15822-1"/>
    <property type="nucleotide sequence ID" value="XM_054355271.1"/>
</dbReference>
<dbReference type="RefSeq" id="XP_054211247.1">
    <molecule id="P15822-1"/>
    <property type="nucleotide sequence ID" value="XM_054355272.1"/>
</dbReference>
<dbReference type="RefSeq" id="XP_054211248.1">
    <molecule id="P15822-1"/>
    <property type="nucleotide sequence ID" value="XM_054355273.1"/>
</dbReference>
<dbReference type="RefSeq" id="XP_054211249.1">
    <molecule id="P15822-1"/>
    <property type="nucleotide sequence ID" value="XM_054355274.1"/>
</dbReference>
<dbReference type="PDB" id="1BBO">
    <property type="method" value="NMR"/>
    <property type="chains" value="A=2087-2143"/>
</dbReference>
<dbReference type="PDB" id="3ZNF">
    <property type="method" value="NMR"/>
    <property type="chains" value="A=2114-2143"/>
</dbReference>
<dbReference type="PDB" id="4ZNF">
    <property type="method" value="NMR"/>
    <property type="chains" value="A=2114-2143"/>
</dbReference>
<dbReference type="PDBsum" id="1BBO"/>
<dbReference type="PDBsum" id="3ZNF"/>
<dbReference type="PDBsum" id="4ZNF"/>
<dbReference type="SMR" id="P15822"/>
<dbReference type="BioGRID" id="109343">
    <property type="interactions" value="190"/>
</dbReference>
<dbReference type="ELM" id="P15822"/>
<dbReference type="FunCoup" id="P15822">
    <property type="interactions" value="3340"/>
</dbReference>
<dbReference type="IntAct" id="P15822">
    <property type="interactions" value="158"/>
</dbReference>
<dbReference type="MINT" id="P15822"/>
<dbReference type="STRING" id="9606.ENSP00000368698"/>
<dbReference type="ChEMBL" id="CHEMBL2909"/>
<dbReference type="MoonDB" id="P15822">
    <property type="type" value="Predicted"/>
</dbReference>
<dbReference type="GlyConnect" id="2896">
    <property type="glycosylation" value="1 O-GlcNAc glycan (1 site)"/>
</dbReference>
<dbReference type="GlyCosmos" id="P15822">
    <property type="glycosylation" value="16 sites, 1 glycan"/>
</dbReference>
<dbReference type="GlyGen" id="P15822">
    <property type="glycosylation" value="53 sites, 1 O-linked glycan (51 sites)"/>
</dbReference>
<dbReference type="iPTMnet" id="P15822"/>
<dbReference type="PhosphoSitePlus" id="P15822"/>
<dbReference type="BioMuta" id="HIVEP1"/>
<dbReference type="DMDM" id="254763385"/>
<dbReference type="jPOST" id="P15822"/>
<dbReference type="MassIVE" id="P15822"/>
<dbReference type="PaxDb" id="9606-ENSP00000368698"/>
<dbReference type="PeptideAtlas" id="P15822"/>
<dbReference type="ProteomicsDB" id="53225">
    <molecule id="P15822-1"/>
</dbReference>
<dbReference type="ProteomicsDB" id="53226">
    <molecule id="P15822-2"/>
</dbReference>
<dbReference type="ProteomicsDB" id="53227">
    <molecule id="P15822-3"/>
</dbReference>
<dbReference type="Pumba" id="P15822"/>
<dbReference type="Antibodypedia" id="24904">
    <property type="antibodies" value="33 antibodies from 13 providers"/>
</dbReference>
<dbReference type="DNASU" id="3096"/>
<dbReference type="Ensembl" id="ENST00000379388.7">
    <molecule id="P15822-1"/>
    <property type="protein sequence ID" value="ENSP00000368698.2"/>
    <property type="gene ID" value="ENSG00000095951.18"/>
</dbReference>
<dbReference type="Ensembl" id="ENST00000478545.2">
    <molecule id="P15822-1"/>
    <property type="protein sequence ID" value="ENSP00000418021.2"/>
    <property type="gene ID" value="ENSG00000095951.18"/>
</dbReference>
<dbReference type="Ensembl" id="ENST00000487103.6">
    <molecule id="P15822-1"/>
    <property type="protein sequence ID" value="ENSP00000417348.2"/>
    <property type="gene ID" value="ENSG00000095951.18"/>
</dbReference>
<dbReference type="Ensembl" id="ENST00000491710.6">
    <molecule id="P15822-1"/>
    <property type="protein sequence ID" value="ENSP00000419762.2"/>
    <property type="gene ID" value="ENSG00000095951.18"/>
</dbReference>
<dbReference type="GeneID" id="3096"/>
<dbReference type="KEGG" id="hsa:3096"/>
<dbReference type="MANE-Select" id="ENST00000379388.7">
    <property type="protein sequence ID" value="ENSP00000368698.2"/>
    <property type="RefSeq nucleotide sequence ID" value="NM_002114.4"/>
    <property type="RefSeq protein sequence ID" value="NP_002105.3"/>
</dbReference>
<dbReference type="UCSC" id="uc003nac.4">
    <molecule id="P15822-1"/>
    <property type="organism name" value="human"/>
</dbReference>
<dbReference type="AGR" id="HGNC:4920"/>
<dbReference type="CTD" id="3096"/>
<dbReference type="DisGeNET" id="3096"/>
<dbReference type="GeneCards" id="HIVEP1"/>
<dbReference type="HGNC" id="HGNC:4920">
    <property type="gene designation" value="HIVEP1"/>
</dbReference>
<dbReference type="HPA" id="ENSG00000095951">
    <property type="expression patterns" value="Low tissue specificity"/>
</dbReference>
<dbReference type="MalaCards" id="HIVEP1"/>
<dbReference type="MIM" id="194540">
    <property type="type" value="gene"/>
</dbReference>
<dbReference type="neXtProt" id="NX_P15822"/>
<dbReference type="OpenTargets" id="ENSG00000095951"/>
<dbReference type="PharmGKB" id="PA29297"/>
<dbReference type="VEuPathDB" id="HostDB:ENSG00000095951"/>
<dbReference type="eggNOG" id="KOG1721">
    <property type="taxonomic scope" value="Eukaryota"/>
</dbReference>
<dbReference type="GeneTree" id="ENSGT00940000158242"/>
<dbReference type="HOGENOM" id="CLU_000719_2_1_1"/>
<dbReference type="InParanoid" id="P15822"/>
<dbReference type="OMA" id="EGKQDCH"/>
<dbReference type="OrthoDB" id="10042249at2759"/>
<dbReference type="PAN-GO" id="P15822">
    <property type="GO annotations" value="4 GO annotations based on evolutionary models"/>
</dbReference>
<dbReference type="PhylomeDB" id="P15822"/>
<dbReference type="TreeFam" id="TF331837"/>
<dbReference type="PathwayCommons" id="P15822"/>
<dbReference type="SignaLink" id="P15822"/>
<dbReference type="BioGRID-ORCS" id="3096">
    <property type="hits" value="13 hits in 1180 CRISPR screens"/>
</dbReference>
<dbReference type="ChiTaRS" id="HIVEP1">
    <property type="organism name" value="human"/>
</dbReference>
<dbReference type="EvolutionaryTrace" id="P15822"/>
<dbReference type="GeneWiki" id="HIVEP1"/>
<dbReference type="GenomeRNAi" id="3096"/>
<dbReference type="Pharos" id="P15822">
    <property type="development level" value="Tbio"/>
</dbReference>
<dbReference type="PRO" id="PR:P15822"/>
<dbReference type="Proteomes" id="UP000005640">
    <property type="component" value="Chromosome 6"/>
</dbReference>
<dbReference type="RNAct" id="P15822">
    <property type="molecule type" value="protein"/>
</dbReference>
<dbReference type="Bgee" id="ENSG00000095951">
    <property type="expression patterns" value="Expressed in calcaneal tendon and 192 other cell types or tissues"/>
</dbReference>
<dbReference type="ExpressionAtlas" id="P15822">
    <property type="expression patterns" value="baseline and differential"/>
</dbReference>
<dbReference type="GO" id="GO:0005829">
    <property type="term" value="C:cytosol"/>
    <property type="evidence" value="ECO:0000314"/>
    <property type="project" value="HPA"/>
</dbReference>
<dbReference type="GO" id="GO:0005739">
    <property type="term" value="C:mitochondrion"/>
    <property type="evidence" value="ECO:0000314"/>
    <property type="project" value="HPA"/>
</dbReference>
<dbReference type="GO" id="GO:0016604">
    <property type="term" value="C:nuclear body"/>
    <property type="evidence" value="ECO:0000314"/>
    <property type="project" value="HPA"/>
</dbReference>
<dbReference type="GO" id="GO:0005654">
    <property type="term" value="C:nucleoplasm"/>
    <property type="evidence" value="ECO:0000314"/>
    <property type="project" value="HPA"/>
</dbReference>
<dbReference type="GO" id="GO:0005634">
    <property type="term" value="C:nucleus"/>
    <property type="evidence" value="ECO:0000314"/>
    <property type="project" value="UniProtKB"/>
</dbReference>
<dbReference type="GO" id="GO:0000981">
    <property type="term" value="F:DNA-binding transcription factor activity, RNA polymerase II-specific"/>
    <property type="evidence" value="ECO:0000318"/>
    <property type="project" value="GO_Central"/>
</dbReference>
<dbReference type="GO" id="GO:0001227">
    <property type="term" value="F:DNA-binding transcription repressor activity, RNA polymerase II-specific"/>
    <property type="evidence" value="ECO:0007669"/>
    <property type="project" value="Ensembl"/>
</dbReference>
<dbReference type="GO" id="GO:0000978">
    <property type="term" value="F:RNA polymerase II cis-regulatory region sequence-specific DNA binding"/>
    <property type="evidence" value="ECO:0000318"/>
    <property type="project" value="GO_Central"/>
</dbReference>
<dbReference type="GO" id="GO:1990837">
    <property type="term" value="F:sequence-specific double-stranded DNA binding"/>
    <property type="evidence" value="ECO:0000314"/>
    <property type="project" value="ARUK-UCL"/>
</dbReference>
<dbReference type="GO" id="GO:0008270">
    <property type="term" value="F:zinc ion binding"/>
    <property type="evidence" value="ECO:0007669"/>
    <property type="project" value="UniProtKB-KW"/>
</dbReference>
<dbReference type="GO" id="GO:0030509">
    <property type="term" value="P:BMP signaling pathway"/>
    <property type="evidence" value="ECO:0000314"/>
    <property type="project" value="FlyBase"/>
</dbReference>
<dbReference type="GO" id="GO:0000122">
    <property type="term" value="P:negative regulation of transcription by RNA polymerase II"/>
    <property type="evidence" value="ECO:0000314"/>
    <property type="project" value="FlyBase"/>
</dbReference>
<dbReference type="GO" id="GO:0045944">
    <property type="term" value="P:positive regulation of transcription by RNA polymerase II"/>
    <property type="evidence" value="ECO:0000314"/>
    <property type="project" value="FlyBase"/>
</dbReference>
<dbReference type="GO" id="GO:0006357">
    <property type="term" value="P:regulation of transcription by RNA polymerase II"/>
    <property type="evidence" value="ECO:0000318"/>
    <property type="project" value="GO_Central"/>
</dbReference>
<dbReference type="FunFam" id="3.30.160.60:FF:000033">
    <property type="entry name" value="Immunodeficiency virus type I enhancer binding protein 1"/>
    <property type="match status" value="1"/>
</dbReference>
<dbReference type="FunFam" id="3.30.160.60:FF:000594">
    <property type="entry name" value="Transcription factor HIVEP2"/>
    <property type="match status" value="1"/>
</dbReference>
<dbReference type="FunFam" id="3.30.160.60:FF:001151">
    <property type="entry name" value="zinc finger homeobox protein 3"/>
    <property type="match status" value="1"/>
</dbReference>
<dbReference type="Gene3D" id="3.30.160.60">
    <property type="entry name" value="Classic Zinc Finger"/>
    <property type="match status" value="4"/>
</dbReference>
<dbReference type="InterPro" id="IPR034729">
    <property type="entry name" value="ZF_CCHC_HIVEP"/>
</dbReference>
<dbReference type="InterPro" id="IPR051969">
    <property type="entry name" value="Zinc-finger_DNA-bd_regulators"/>
</dbReference>
<dbReference type="InterPro" id="IPR036236">
    <property type="entry name" value="Znf_C2H2_sf"/>
</dbReference>
<dbReference type="InterPro" id="IPR013087">
    <property type="entry name" value="Znf_C2H2_type"/>
</dbReference>
<dbReference type="PANTHER" id="PTHR45944">
    <property type="entry name" value="SCHNURRI, ISOFORM F"/>
    <property type="match status" value="1"/>
</dbReference>
<dbReference type="PANTHER" id="PTHR45944:SF3">
    <property type="entry name" value="ZINC FINGER PROTEIN 40"/>
    <property type="match status" value="1"/>
</dbReference>
<dbReference type="Pfam" id="PF00096">
    <property type="entry name" value="zf-C2H2"/>
    <property type="match status" value="4"/>
</dbReference>
<dbReference type="SMART" id="SM00355">
    <property type="entry name" value="ZnF_C2H2"/>
    <property type="match status" value="5"/>
</dbReference>
<dbReference type="SUPFAM" id="SSF57667">
    <property type="entry name" value="beta-beta-alpha zinc fingers"/>
    <property type="match status" value="3"/>
</dbReference>
<dbReference type="PROSITE" id="PS51811">
    <property type="entry name" value="ZF_CCHC_HIVEP"/>
    <property type="match status" value="1"/>
</dbReference>
<dbReference type="PROSITE" id="PS00028">
    <property type="entry name" value="ZINC_FINGER_C2H2_1"/>
    <property type="match status" value="4"/>
</dbReference>
<dbReference type="PROSITE" id="PS50157">
    <property type="entry name" value="ZINC_FINGER_C2H2_2"/>
    <property type="match status" value="4"/>
</dbReference>
<accession>P15822</accession>
<accession>B2RTU3</accession>
<accession>Q14122</accession>
<accession>Q5MPB1</accession>
<accession>Q5VW60</accession>
<protein>
    <recommendedName>
        <fullName>Zinc finger protein 40</fullName>
    </recommendedName>
    <alternativeName>
        <fullName>Cirhin interaction protein</fullName>
        <shortName>CIRIP</shortName>
    </alternativeName>
    <alternativeName>
        <fullName>Gate keeper of apoptosis-activating protein</fullName>
        <shortName>GAAP</shortName>
    </alternativeName>
    <alternativeName>
        <fullName>Human immunodeficiency virus type I enhancer-binding protein 1</fullName>
        <shortName>HIV-EP1</shortName>
    </alternativeName>
    <alternativeName>
        <fullName>Major histocompatibility complex-binding protein 1</fullName>
        <shortName>MBP-1</shortName>
    </alternativeName>
    <alternativeName>
        <fullName>Positive regulatory domain II-binding factor 1</fullName>
        <shortName>PRDII-BF1</shortName>
    </alternativeName>
</protein>